<protein>
    <recommendedName>
        <fullName>Derlin-1</fullName>
    </recommendedName>
    <alternativeName>
        <fullName>18 kDa cold-induced protein</fullName>
    </alternativeName>
    <alternativeName>
        <fullName>DER1-like protein 1</fullName>
    </alternativeName>
    <alternativeName>
        <fullName>OsDerlin 1-1</fullName>
    </alternativeName>
</protein>
<feature type="chain" id="PRO_0000079322" description="Derlin-1">
    <location>
        <begin position="1"/>
        <end position="242"/>
    </location>
</feature>
<feature type="topological domain" description="Cytoplasmic" evidence="2">
    <location>
        <begin position="1"/>
        <end position="20"/>
    </location>
</feature>
<feature type="transmembrane region" description="Helical; Name=1" evidence="2">
    <location>
        <begin position="21"/>
        <end position="41"/>
    </location>
</feature>
<feature type="topological domain" description="Lumenal" evidence="2">
    <location>
        <begin position="42"/>
        <end position="55"/>
    </location>
</feature>
<feature type="transmembrane region" description="Helical; Name=2" evidence="2">
    <location>
        <begin position="56"/>
        <end position="76"/>
    </location>
</feature>
<feature type="topological domain" description="Cytoplasmic" evidence="2">
    <location>
        <begin position="77"/>
        <end position="94"/>
    </location>
</feature>
<feature type="transmembrane region" description="Helical; Name=3" evidence="2">
    <location>
        <begin position="95"/>
        <end position="115"/>
    </location>
</feature>
<feature type="topological domain" description="Lumenal" evidence="2">
    <location>
        <begin position="116"/>
        <end position="157"/>
    </location>
</feature>
<feature type="transmembrane region" description="Helical; Name=4" evidence="2">
    <location>
        <begin position="158"/>
        <end position="178"/>
    </location>
</feature>
<feature type="topological domain" description="Cytoplasmic" evidence="2">
    <location>
        <begin position="179"/>
        <end position="242"/>
    </location>
</feature>
<evidence type="ECO:0000250" key="1"/>
<evidence type="ECO:0000255" key="2"/>
<evidence type="ECO:0000305" key="3"/>
<evidence type="ECO:0000312" key="4">
    <source>
        <dbReference type="EMBL" id="EEE62589.1"/>
    </source>
</evidence>
<reference key="1">
    <citation type="journal article" date="2005" name="Mol. Genet. Genomics">
        <title>A fine physical map of the rice chromosome 5.</title>
        <authorList>
            <person name="Cheng C.-H."/>
            <person name="Chung M.C."/>
            <person name="Liu S.-M."/>
            <person name="Chen S.-K."/>
            <person name="Kao F.Y."/>
            <person name="Lin S.-J."/>
            <person name="Hsiao S.-H."/>
            <person name="Tseng I.C."/>
            <person name="Hsing Y.-I.C."/>
            <person name="Wu H.-P."/>
            <person name="Chen C.-S."/>
            <person name="Shaw J.-F."/>
            <person name="Wu J."/>
            <person name="Matsumoto T."/>
            <person name="Sasaki T."/>
            <person name="Chen H.-C."/>
            <person name="Chow T.-Y."/>
        </authorList>
    </citation>
    <scope>NUCLEOTIDE SEQUENCE [LARGE SCALE GENOMIC DNA]</scope>
    <source>
        <strain>cv. Nipponbare</strain>
    </source>
</reference>
<reference key="2">
    <citation type="journal article" date="2005" name="Nature">
        <title>The map-based sequence of the rice genome.</title>
        <authorList>
            <consortium name="International rice genome sequencing project (IRGSP)"/>
        </authorList>
    </citation>
    <scope>NUCLEOTIDE SEQUENCE [LARGE SCALE GENOMIC DNA]</scope>
    <source>
        <strain>cv. Nipponbare</strain>
    </source>
</reference>
<reference key="3">
    <citation type="journal article" date="2013" name="Rice">
        <title>Improvement of the Oryza sativa Nipponbare reference genome using next generation sequence and optical map data.</title>
        <authorList>
            <person name="Kawahara Y."/>
            <person name="de la Bastide M."/>
            <person name="Hamilton J.P."/>
            <person name="Kanamori H."/>
            <person name="McCombie W.R."/>
            <person name="Ouyang S."/>
            <person name="Schwartz D.C."/>
            <person name="Tanaka T."/>
            <person name="Wu J."/>
            <person name="Zhou S."/>
            <person name="Childs K.L."/>
            <person name="Davidson R.M."/>
            <person name="Lin H."/>
            <person name="Quesada-Ocampo L."/>
            <person name="Vaillancourt B."/>
            <person name="Sakai H."/>
            <person name="Lee S.S."/>
            <person name="Kim J."/>
            <person name="Numa H."/>
            <person name="Itoh T."/>
            <person name="Buell C.R."/>
            <person name="Matsumoto T."/>
        </authorList>
    </citation>
    <scope>GENOME REANNOTATION</scope>
    <source>
        <strain>cv. Nipponbare</strain>
    </source>
</reference>
<reference key="4">
    <citation type="journal article" date="2005" name="PLoS Biol.">
        <title>The genomes of Oryza sativa: a history of duplications.</title>
        <authorList>
            <person name="Yu J."/>
            <person name="Wang J."/>
            <person name="Lin W."/>
            <person name="Li S."/>
            <person name="Li H."/>
            <person name="Zhou J."/>
            <person name="Ni P."/>
            <person name="Dong W."/>
            <person name="Hu S."/>
            <person name="Zeng C."/>
            <person name="Zhang J."/>
            <person name="Zhang Y."/>
            <person name="Li R."/>
            <person name="Xu Z."/>
            <person name="Li S."/>
            <person name="Li X."/>
            <person name="Zheng H."/>
            <person name="Cong L."/>
            <person name="Lin L."/>
            <person name="Yin J."/>
            <person name="Geng J."/>
            <person name="Li G."/>
            <person name="Shi J."/>
            <person name="Liu J."/>
            <person name="Lv H."/>
            <person name="Li J."/>
            <person name="Wang J."/>
            <person name="Deng Y."/>
            <person name="Ran L."/>
            <person name="Shi X."/>
            <person name="Wang X."/>
            <person name="Wu Q."/>
            <person name="Li C."/>
            <person name="Ren X."/>
            <person name="Wang J."/>
            <person name="Wang X."/>
            <person name="Li D."/>
            <person name="Liu D."/>
            <person name="Zhang X."/>
            <person name="Ji Z."/>
            <person name="Zhao W."/>
            <person name="Sun Y."/>
            <person name="Zhang Z."/>
            <person name="Bao J."/>
            <person name="Han Y."/>
            <person name="Dong L."/>
            <person name="Ji J."/>
            <person name="Chen P."/>
            <person name="Wu S."/>
            <person name="Liu J."/>
            <person name="Xiao Y."/>
            <person name="Bu D."/>
            <person name="Tan J."/>
            <person name="Yang L."/>
            <person name="Ye C."/>
            <person name="Zhang J."/>
            <person name="Xu J."/>
            <person name="Zhou Y."/>
            <person name="Yu Y."/>
            <person name="Zhang B."/>
            <person name="Zhuang S."/>
            <person name="Wei H."/>
            <person name="Liu B."/>
            <person name="Lei M."/>
            <person name="Yu H."/>
            <person name="Li Y."/>
            <person name="Xu H."/>
            <person name="Wei S."/>
            <person name="He X."/>
            <person name="Fang L."/>
            <person name="Zhang Z."/>
            <person name="Zhang Y."/>
            <person name="Huang X."/>
            <person name="Su Z."/>
            <person name="Tong W."/>
            <person name="Li J."/>
            <person name="Tong Z."/>
            <person name="Li S."/>
            <person name="Ye J."/>
            <person name="Wang L."/>
            <person name="Fang L."/>
            <person name="Lei T."/>
            <person name="Chen C.-S."/>
            <person name="Chen H.-C."/>
            <person name="Xu Z."/>
            <person name="Li H."/>
            <person name="Huang H."/>
            <person name="Zhang F."/>
            <person name="Xu H."/>
            <person name="Li N."/>
            <person name="Zhao C."/>
            <person name="Li S."/>
            <person name="Dong L."/>
            <person name="Huang Y."/>
            <person name="Li L."/>
            <person name="Xi Y."/>
            <person name="Qi Q."/>
            <person name="Li W."/>
            <person name="Zhang B."/>
            <person name="Hu W."/>
            <person name="Zhang Y."/>
            <person name="Tian X."/>
            <person name="Jiao Y."/>
            <person name="Liang X."/>
            <person name="Jin J."/>
            <person name="Gao L."/>
            <person name="Zheng W."/>
            <person name="Hao B."/>
            <person name="Liu S.-M."/>
            <person name="Wang W."/>
            <person name="Yuan L."/>
            <person name="Cao M."/>
            <person name="McDermott J."/>
            <person name="Samudrala R."/>
            <person name="Wang J."/>
            <person name="Wong G.K.-S."/>
            <person name="Yang H."/>
        </authorList>
    </citation>
    <scope>NUCLEOTIDE SEQUENCE [LARGE SCALE GENOMIC DNA]</scope>
    <source>
        <strain>cv. Nipponbare</strain>
    </source>
</reference>
<reference key="5">
    <citation type="submission" date="2006-10" db="EMBL/GenBank/DDBJ databases">
        <title>Oryza sativa full length cDNA.</title>
        <authorList>
            <consortium name="The rice full-length cDNA consortium"/>
        </authorList>
    </citation>
    <scope>NUCLEOTIDE SEQUENCE [LARGE SCALE MRNA]</scope>
    <source>
        <strain>cv. Nipponbare</strain>
    </source>
</reference>
<reference key="6">
    <citation type="journal article" date="1992" name="Plant Physiol.">
        <title>Molecular cloning and characterization of genes related to chilling tolerance in rice.</title>
        <authorList>
            <person name="Binh L.T."/>
            <person name="Oono K."/>
        </authorList>
    </citation>
    <scope>PARTIAL NUCLEOTIDE SEQUENCE [MRNA]</scope>
    <source>
        <strain>cv. Nipponbare</strain>
        <tissue>Seedling</tissue>
    </source>
</reference>
<keyword id="KW-0256">Endoplasmic reticulum</keyword>
<keyword id="KW-0472">Membrane</keyword>
<keyword id="KW-1185">Reference proteome</keyword>
<keyword id="KW-0812">Transmembrane</keyword>
<keyword id="KW-1133">Transmembrane helix</keyword>
<sequence length="242" mass="27532">MSSPAEYYNSLPPISKAYGTLCFFATVLCQLQILNPPFLALYYPFVFKKFQIWRLFTSFFFLGKFSINFGIRLLMIARYGVQLEKGAFEKRTADFLWMMIFGAISLLALSAIPFLDIYFLGVPMVSMLLYVWSREYPNSQISMYGLVQLRSFYLPWAMLGLDVIFGSEILPGLLGILVGHTYYFLSVLHPLATGKNYLKTPMWVHKIVARFRIGVQANAPVRPAAANTGSGAFRGRSYRLSQ</sequence>
<gene>
    <name type="primary">DER1</name>
    <name type="ordered locus">Os05g0187800</name>
    <name type="ordered locus">LOC_Os05g09550</name>
    <name type="ORF">B1007D10.4</name>
    <name type="ORF">OJ1097_A12.10</name>
    <name evidence="4" type="ORF">OsJ_17392</name>
</gene>
<organism>
    <name type="scientific">Oryza sativa subsp. japonica</name>
    <name type="common">Rice</name>
    <dbReference type="NCBI Taxonomy" id="39947"/>
    <lineage>
        <taxon>Eukaryota</taxon>
        <taxon>Viridiplantae</taxon>
        <taxon>Streptophyta</taxon>
        <taxon>Embryophyta</taxon>
        <taxon>Tracheophyta</taxon>
        <taxon>Spermatophyta</taxon>
        <taxon>Magnoliopsida</taxon>
        <taxon>Liliopsida</taxon>
        <taxon>Poales</taxon>
        <taxon>Poaceae</taxon>
        <taxon>BOP clade</taxon>
        <taxon>Oryzoideae</taxon>
        <taxon>Oryzeae</taxon>
        <taxon>Oryzinae</taxon>
        <taxon>Oryza</taxon>
        <taxon>Oryza sativa</taxon>
    </lineage>
</organism>
<dbReference type="EMBL" id="AC093954">
    <property type="protein sequence ID" value="AAS86403.1"/>
    <property type="status" value="ALT_SEQ"/>
    <property type="molecule type" value="Genomic_DNA"/>
</dbReference>
<dbReference type="EMBL" id="AC148611">
    <property type="protein sequence ID" value="AAV31196.1"/>
    <property type="status" value="ALT_SEQ"/>
    <property type="molecule type" value="Genomic_DNA"/>
</dbReference>
<dbReference type="EMBL" id="AP014961">
    <property type="protein sequence ID" value="BAS92615.1"/>
    <property type="molecule type" value="Genomic_DNA"/>
</dbReference>
<dbReference type="EMBL" id="CM000142">
    <property type="protein sequence ID" value="EEE62589.1"/>
    <property type="molecule type" value="Genomic_DNA"/>
</dbReference>
<dbReference type="EMBL" id="AK243296">
    <property type="protein sequence ID" value="BAH01528.1"/>
    <property type="molecule type" value="mRNA"/>
</dbReference>
<dbReference type="EMBL" id="D10860">
    <property type="protein sequence ID" value="BAA01631.1"/>
    <property type="status" value="ALT_SEQ"/>
    <property type="molecule type" value="mRNA"/>
</dbReference>
<dbReference type="RefSeq" id="XP_015640689.1">
    <property type="nucleotide sequence ID" value="XM_015785203.1"/>
</dbReference>
<dbReference type="SMR" id="Q06397"/>
<dbReference type="FunCoup" id="Q06397">
    <property type="interactions" value="584"/>
</dbReference>
<dbReference type="STRING" id="39947.Q06397"/>
<dbReference type="PaxDb" id="39947-Q06397"/>
<dbReference type="EnsemblPlants" id="Os05t0187800-01">
    <property type="protein sequence ID" value="Os05t0187800-01"/>
    <property type="gene ID" value="Os05g0187800"/>
</dbReference>
<dbReference type="Gramene" id="Os05t0187800-01">
    <property type="protein sequence ID" value="Os05t0187800-01"/>
    <property type="gene ID" value="Os05g0187800"/>
</dbReference>
<dbReference type="eggNOG" id="KOG0858">
    <property type="taxonomic scope" value="Eukaryota"/>
</dbReference>
<dbReference type="HOGENOM" id="CLU_051898_5_0_1"/>
<dbReference type="InParanoid" id="Q06397"/>
<dbReference type="OMA" id="SSPAEWY"/>
<dbReference type="OrthoDB" id="1716531at2759"/>
<dbReference type="Proteomes" id="UP000000763">
    <property type="component" value="Chromosome 5"/>
</dbReference>
<dbReference type="Proteomes" id="UP000007752">
    <property type="component" value="Chromosome 5"/>
</dbReference>
<dbReference type="Proteomes" id="UP000059680">
    <property type="component" value="Chromosome 5"/>
</dbReference>
<dbReference type="GO" id="GO:0005789">
    <property type="term" value="C:endoplasmic reticulum membrane"/>
    <property type="evidence" value="ECO:0000318"/>
    <property type="project" value="GO_Central"/>
</dbReference>
<dbReference type="GO" id="GO:0005047">
    <property type="term" value="F:signal recognition particle binding"/>
    <property type="evidence" value="ECO:0000318"/>
    <property type="project" value="GO_Central"/>
</dbReference>
<dbReference type="GO" id="GO:0030968">
    <property type="term" value="P:endoplasmic reticulum unfolded protein response"/>
    <property type="evidence" value="ECO:0000318"/>
    <property type="project" value="GO_Central"/>
</dbReference>
<dbReference type="GO" id="GO:0036503">
    <property type="term" value="P:ERAD pathway"/>
    <property type="evidence" value="ECO:0000318"/>
    <property type="project" value="GO_Central"/>
</dbReference>
<dbReference type="InterPro" id="IPR007599">
    <property type="entry name" value="DER1"/>
</dbReference>
<dbReference type="InterPro" id="IPR035952">
    <property type="entry name" value="Rhomboid-like_sf"/>
</dbReference>
<dbReference type="PANTHER" id="PTHR11009">
    <property type="entry name" value="DER1-LIKE PROTEIN, DERLIN"/>
    <property type="match status" value="1"/>
</dbReference>
<dbReference type="Pfam" id="PF04511">
    <property type="entry name" value="DER1"/>
    <property type="match status" value="1"/>
</dbReference>
<dbReference type="SUPFAM" id="SSF144091">
    <property type="entry name" value="Rhomboid-like"/>
    <property type="match status" value="1"/>
</dbReference>
<proteinExistence type="evidence at transcript level"/>
<comment type="function">
    <text evidence="1">May be involved in the degradation process of specific misfolded endoplasmic reticulum (ER) luminal proteins.</text>
</comment>
<comment type="subcellular location">
    <subcellularLocation>
        <location evidence="1">Endoplasmic reticulum membrane</location>
        <topology evidence="1">Multi-pass membrane protein</topology>
    </subcellularLocation>
</comment>
<comment type="tissue specificity">
    <text>Seedling shoots and roots.</text>
</comment>
<comment type="similarity">
    <text evidence="3">Belongs to the derlin family.</text>
</comment>
<comment type="sequence caution" evidence="3">
    <conflict type="erroneous gene model prediction">
        <sequence resource="EMBL-CDS" id="AAS86403"/>
    </conflict>
</comment>
<comment type="sequence caution" evidence="3">
    <conflict type="erroneous gene model prediction">
        <sequence resource="EMBL-CDS" id="AAV31196"/>
    </conflict>
</comment>
<comment type="sequence caution" evidence="3">
    <conflict type="frameshift">
        <sequence resource="EMBL-CDS" id="BAA01631"/>
    </conflict>
</comment>
<comment type="sequence caution" evidence="3">
    <conflict type="miscellaneous discrepancy">
        <sequence resource="EMBL-CDS" id="BAA01631"/>
    </conflict>
    <text>Sequencing errors.</text>
</comment>
<name>DERL1_ORYSJ</name>
<accession>Q06397</accession>
<accession>B7FA80</accession>
<accession>Q75KY2</accession>